<keyword id="KW-0963">Cytoplasm</keyword>
<keyword id="KW-0251">Elongation factor</keyword>
<keyword id="KW-0648">Protein biosynthesis</keyword>
<keyword id="KW-1185">Reference proteome</keyword>
<protein>
    <recommendedName>
        <fullName evidence="1">Elongation factor Ts</fullName>
        <shortName evidence="1">EF-Ts</shortName>
    </recommendedName>
</protein>
<organism>
    <name type="scientific">Bdellovibrio bacteriovorus (strain ATCC 15356 / DSM 50701 / NCIMB 9529 / HD100)</name>
    <dbReference type="NCBI Taxonomy" id="264462"/>
    <lineage>
        <taxon>Bacteria</taxon>
        <taxon>Pseudomonadati</taxon>
        <taxon>Bdellovibrionota</taxon>
        <taxon>Bdellovibrionia</taxon>
        <taxon>Bdellovibrionales</taxon>
        <taxon>Pseudobdellovibrionaceae</taxon>
        <taxon>Bdellovibrio</taxon>
    </lineage>
</organism>
<sequence length="308" mass="32957">MSISATLVKELREKTNAGMMDCKKALEATSGDFNAAVEWLRVKGLGAAAKKADRIAAEGAVFAELHGNTGVVIEINSETDFVARNDGFKALAANVVSHLAKTNLEGDVLAQAYAADSSKKLGDLFTEATATIGEKIVLRRQEKYTATATSLVHTYLHGEGKIGVMIEVGASKPEAVSNPALKTFAQDVALHIAAMNPMAISSEQIPADVVSKEKEILTAKNLESGKKPEMIEKIVEGQIRKFLAENCLLDQPFVKNPDMKVSDLAKSVGKEIGADVTVKRFVRFELGAGIEKKTNDFAAEVAAQMKGH</sequence>
<feature type="chain" id="PRO_0000161082" description="Elongation factor Ts">
    <location>
        <begin position="1"/>
        <end position="308"/>
    </location>
</feature>
<feature type="region of interest" description="Involved in Mg(2+) ion dislocation from EF-Tu" evidence="1">
    <location>
        <begin position="79"/>
        <end position="82"/>
    </location>
</feature>
<proteinExistence type="inferred from homology"/>
<comment type="function">
    <text evidence="1">Associates with the EF-Tu.GDP complex and induces the exchange of GDP to GTP. It remains bound to the aminoacyl-tRNA.EF-Tu.GTP complex up to the GTP hydrolysis stage on the ribosome.</text>
</comment>
<comment type="subcellular location">
    <subcellularLocation>
        <location evidence="1">Cytoplasm</location>
    </subcellularLocation>
</comment>
<comment type="similarity">
    <text evidence="1">Belongs to the EF-Ts family.</text>
</comment>
<reference key="1">
    <citation type="journal article" date="2004" name="Science">
        <title>A predator unmasked: life cycle of Bdellovibrio bacteriovorus from a genomic perspective.</title>
        <authorList>
            <person name="Rendulic S."/>
            <person name="Jagtap P."/>
            <person name="Rosinus A."/>
            <person name="Eppinger M."/>
            <person name="Baar C."/>
            <person name="Lanz C."/>
            <person name="Keller H."/>
            <person name="Lambert C."/>
            <person name="Evans K.J."/>
            <person name="Goesmann A."/>
            <person name="Meyer F."/>
            <person name="Sockett R.E."/>
            <person name="Schuster S.C."/>
        </authorList>
    </citation>
    <scope>NUCLEOTIDE SEQUENCE [LARGE SCALE GENOMIC DNA]</scope>
    <source>
        <strain>ATCC 15356 / DSM 50701 / NCIMB 9529 / HD100</strain>
    </source>
</reference>
<dbReference type="EMBL" id="BX842656">
    <property type="protein sequence ID" value="CAE81142.1"/>
    <property type="molecule type" value="Genomic_DNA"/>
</dbReference>
<dbReference type="RefSeq" id="WP_011166085.1">
    <property type="nucleotide sequence ID" value="NC_005363.1"/>
</dbReference>
<dbReference type="SMR" id="P61331"/>
<dbReference type="STRING" id="264462.Bd3782"/>
<dbReference type="GeneID" id="93014556"/>
<dbReference type="KEGG" id="bba:Bd3782"/>
<dbReference type="eggNOG" id="COG0264">
    <property type="taxonomic scope" value="Bacteria"/>
</dbReference>
<dbReference type="HOGENOM" id="CLU_047155_0_2_7"/>
<dbReference type="Proteomes" id="UP000008080">
    <property type="component" value="Chromosome"/>
</dbReference>
<dbReference type="GO" id="GO:0005737">
    <property type="term" value="C:cytoplasm"/>
    <property type="evidence" value="ECO:0007669"/>
    <property type="project" value="UniProtKB-SubCell"/>
</dbReference>
<dbReference type="GO" id="GO:0003746">
    <property type="term" value="F:translation elongation factor activity"/>
    <property type="evidence" value="ECO:0007669"/>
    <property type="project" value="UniProtKB-UniRule"/>
</dbReference>
<dbReference type="CDD" id="cd14275">
    <property type="entry name" value="UBA_EF-Ts"/>
    <property type="match status" value="1"/>
</dbReference>
<dbReference type="FunFam" id="1.10.286.20:FF:000001">
    <property type="entry name" value="Elongation factor Ts"/>
    <property type="match status" value="1"/>
</dbReference>
<dbReference type="FunFam" id="1.10.8.10:FF:000001">
    <property type="entry name" value="Elongation factor Ts"/>
    <property type="match status" value="1"/>
</dbReference>
<dbReference type="Gene3D" id="1.10.286.20">
    <property type="match status" value="1"/>
</dbReference>
<dbReference type="Gene3D" id="1.10.8.10">
    <property type="entry name" value="DNA helicase RuvA subunit, C-terminal domain"/>
    <property type="match status" value="1"/>
</dbReference>
<dbReference type="Gene3D" id="3.30.479.20">
    <property type="entry name" value="Elongation factor Ts, dimerisation domain"/>
    <property type="match status" value="2"/>
</dbReference>
<dbReference type="HAMAP" id="MF_00050">
    <property type="entry name" value="EF_Ts"/>
    <property type="match status" value="1"/>
</dbReference>
<dbReference type="InterPro" id="IPR036402">
    <property type="entry name" value="EF-Ts_dimer_sf"/>
</dbReference>
<dbReference type="InterPro" id="IPR001816">
    <property type="entry name" value="Transl_elong_EFTs/EF1B"/>
</dbReference>
<dbReference type="InterPro" id="IPR014039">
    <property type="entry name" value="Transl_elong_EFTs/EF1B_dimer"/>
</dbReference>
<dbReference type="InterPro" id="IPR018101">
    <property type="entry name" value="Transl_elong_Ts_CS"/>
</dbReference>
<dbReference type="InterPro" id="IPR009060">
    <property type="entry name" value="UBA-like_sf"/>
</dbReference>
<dbReference type="NCBIfam" id="TIGR00116">
    <property type="entry name" value="tsf"/>
    <property type="match status" value="1"/>
</dbReference>
<dbReference type="PANTHER" id="PTHR11741">
    <property type="entry name" value="ELONGATION FACTOR TS"/>
    <property type="match status" value="1"/>
</dbReference>
<dbReference type="PANTHER" id="PTHR11741:SF0">
    <property type="entry name" value="ELONGATION FACTOR TS, MITOCHONDRIAL"/>
    <property type="match status" value="1"/>
</dbReference>
<dbReference type="Pfam" id="PF00889">
    <property type="entry name" value="EF_TS"/>
    <property type="match status" value="1"/>
</dbReference>
<dbReference type="SUPFAM" id="SSF54713">
    <property type="entry name" value="Elongation factor Ts (EF-Ts), dimerisation domain"/>
    <property type="match status" value="2"/>
</dbReference>
<dbReference type="SUPFAM" id="SSF46934">
    <property type="entry name" value="UBA-like"/>
    <property type="match status" value="1"/>
</dbReference>
<dbReference type="PROSITE" id="PS01126">
    <property type="entry name" value="EF_TS_1"/>
    <property type="match status" value="1"/>
</dbReference>
<dbReference type="PROSITE" id="PS01127">
    <property type="entry name" value="EF_TS_2"/>
    <property type="match status" value="1"/>
</dbReference>
<accession>P61331</accession>
<evidence type="ECO:0000255" key="1">
    <source>
        <dbReference type="HAMAP-Rule" id="MF_00050"/>
    </source>
</evidence>
<gene>
    <name evidence="1" type="primary">tsf</name>
    <name type="ordered locus">Bd3782</name>
</gene>
<name>EFTS_BDEBA</name>